<proteinExistence type="inferred from homology"/>
<accession>A8H968</accession>
<feature type="chain" id="PRO_1000080506" description="Probable protein kinase UbiB">
    <location>
        <begin position="1"/>
        <end position="549"/>
    </location>
</feature>
<feature type="transmembrane region" description="Helical" evidence="1">
    <location>
        <begin position="498"/>
        <end position="518"/>
    </location>
</feature>
<feature type="transmembrane region" description="Helical" evidence="1">
    <location>
        <begin position="520"/>
        <end position="540"/>
    </location>
</feature>
<feature type="domain" description="Protein kinase" evidence="1">
    <location>
        <begin position="123"/>
        <end position="501"/>
    </location>
</feature>
<feature type="active site" description="Proton acceptor" evidence="1">
    <location>
        <position position="287"/>
    </location>
</feature>
<feature type="binding site" evidence="1">
    <location>
        <begin position="129"/>
        <end position="137"/>
    </location>
    <ligand>
        <name>ATP</name>
        <dbReference type="ChEBI" id="CHEBI:30616"/>
    </ligand>
</feature>
<feature type="binding site" evidence="1">
    <location>
        <position position="152"/>
    </location>
    <ligand>
        <name>ATP</name>
        <dbReference type="ChEBI" id="CHEBI:30616"/>
    </ligand>
</feature>
<protein>
    <recommendedName>
        <fullName evidence="1">Probable protein kinase UbiB</fullName>
        <ecNumber evidence="1">2.7.-.-</ecNumber>
    </recommendedName>
    <alternativeName>
        <fullName evidence="1">Ubiquinone biosynthesis protein UbiB</fullName>
    </alternativeName>
</protein>
<name>UBIB_SHEPA</name>
<reference key="1">
    <citation type="submission" date="2007-10" db="EMBL/GenBank/DDBJ databases">
        <title>Complete sequence of Shewanella pealeana ATCC 700345.</title>
        <authorList>
            <consortium name="US DOE Joint Genome Institute"/>
            <person name="Copeland A."/>
            <person name="Lucas S."/>
            <person name="Lapidus A."/>
            <person name="Barry K."/>
            <person name="Glavina del Rio T."/>
            <person name="Dalin E."/>
            <person name="Tice H."/>
            <person name="Pitluck S."/>
            <person name="Chertkov O."/>
            <person name="Brettin T."/>
            <person name="Bruce D."/>
            <person name="Detter J.C."/>
            <person name="Han C."/>
            <person name="Schmutz J."/>
            <person name="Larimer F."/>
            <person name="Land M."/>
            <person name="Hauser L."/>
            <person name="Kyrpides N."/>
            <person name="Kim E."/>
            <person name="Zhao J.-S.Z."/>
            <person name="Manno D."/>
            <person name="Hawari J."/>
            <person name="Richardson P."/>
        </authorList>
    </citation>
    <scope>NUCLEOTIDE SEQUENCE [LARGE SCALE GENOMIC DNA]</scope>
    <source>
        <strain>ATCC 700345 / ANG-SQ1</strain>
    </source>
</reference>
<gene>
    <name evidence="1" type="primary">ubiB</name>
    <name type="ordered locus">Spea_3794</name>
</gene>
<evidence type="ECO:0000255" key="1">
    <source>
        <dbReference type="HAMAP-Rule" id="MF_00414"/>
    </source>
</evidence>
<comment type="function">
    <text evidence="1">Is probably a protein kinase regulator of UbiI activity which is involved in aerobic coenzyme Q (ubiquinone) biosynthesis.</text>
</comment>
<comment type="pathway">
    <text>Cofactor biosynthesis; ubiquinone biosynthesis [regulation].</text>
</comment>
<comment type="subcellular location">
    <subcellularLocation>
        <location evidence="1">Cell inner membrane</location>
        <topology evidence="1">Multi-pass membrane protein</topology>
    </subcellularLocation>
</comment>
<comment type="similarity">
    <text evidence="1">Belongs to the ABC1 family. UbiB subfamily.</text>
</comment>
<dbReference type="EC" id="2.7.-.-" evidence="1"/>
<dbReference type="EMBL" id="CP000851">
    <property type="protein sequence ID" value="ABV89105.1"/>
    <property type="molecule type" value="Genomic_DNA"/>
</dbReference>
<dbReference type="RefSeq" id="WP_012156987.1">
    <property type="nucleotide sequence ID" value="NC_009901.1"/>
</dbReference>
<dbReference type="SMR" id="A8H968"/>
<dbReference type="STRING" id="398579.Spea_3794"/>
<dbReference type="KEGG" id="spl:Spea_3794"/>
<dbReference type="eggNOG" id="COG0661">
    <property type="taxonomic scope" value="Bacteria"/>
</dbReference>
<dbReference type="HOGENOM" id="CLU_006533_0_0_6"/>
<dbReference type="OrthoDB" id="9795390at2"/>
<dbReference type="UniPathway" id="UPA00232"/>
<dbReference type="Proteomes" id="UP000002608">
    <property type="component" value="Chromosome"/>
</dbReference>
<dbReference type="GO" id="GO:0005886">
    <property type="term" value="C:plasma membrane"/>
    <property type="evidence" value="ECO:0007669"/>
    <property type="project" value="UniProtKB-SubCell"/>
</dbReference>
<dbReference type="GO" id="GO:0005524">
    <property type="term" value="F:ATP binding"/>
    <property type="evidence" value="ECO:0007669"/>
    <property type="project" value="UniProtKB-KW"/>
</dbReference>
<dbReference type="GO" id="GO:0004672">
    <property type="term" value="F:protein kinase activity"/>
    <property type="evidence" value="ECO:0007669"/>
    <property type="project" value="UniProtKB-UniRule"/>
</dbReference>
<dbReference type="GO" id="GO:0010795">
    <property type="term" value="P:regulation of ubiquinone biosynthetic process"/>
    <property type="evidence" value="ECO:0007669"/>
    <property type="project" value="UniProtKB-UniRule"/>
</dbReference>
<dbReference type="GO" id="GO:0006744">
    <property type="term" value="P:ubiquinone biosynthetic process"/>
    <property type="evidence" value="ECO:0007669"/>
    <property type="project" value="UniProtKB-UniPathway"/>
</dbReference>
<dbReference type="CDD" id="cd13972">
    <property type="entry name" value="UbiB"/>
    <property type="match status" value="1"/>
</dbReference>
<dbReference type="HAMAP" id="MF_00414">
    <property type="entry name" value="UbiB"/>
    <property type="match status" value="1"/>
</dbReference>
<dbReference type="InterPro" id="IPR004147">
    <property type="entry name" value="ABC1_dom"/>
</dbReference>
<dbReference type="InterPro" id="IPR011009">
    <property type="entry name" value="Kinase-like_dom_sf"/>
</dbReference>
<dbReference type="InterPro" id="IPR010232">
    <property type="entry name" value="UbiB"/>
</dbReference>
<dbReference type="InterPro" id="IPR045308">
    <property type="entry name" value="UbiB_bact"/>
</dbReference>
<dbReference type="InterPro" id="IPR050154">
    <property type="entry name" value="UbiB_kinase"/>
</dbReference>
<dbReference type="NCBIfam" id="NF003404">
    <property type="entry name" value="PRK04750.1"/>
    <property type="match status" value="1"/>
</dbReference>
<dbReference type="NCBIfam" id="TIGR01982">
    <property type="entry name" value="UbiB"/>
    <property type="match status" value="1"/>
</dbReference>
<dbReference type="PANTHER" id="PTHR10566">
    <property type="entry name" value="CHAPERONE-ACTIVITY OF BC1 COMPLEX CABC1 -RELATED"/>
    <property type="match status" value="1"/>
</dbReference>
<dbReference type="PANTHER" id="PTHR10566:SF113">
    <property type="entry name" value="PROTEIN ACTIVITY OF BC1 COMPLEX KINASE 7, CHLOROPLASTIC"/>
    <property type="match status" value="1"/>
</dbReference>
<dbReference type="Pfam" id="PF03109">
    <property type="entry name" value="ABC1"/>
    <property type="match status" value="1"/>
</dbReference>
<dbReference type="SUPFAM" id="SSF56112">
    <property type="entry name" value="Protein kinase-like (PK-like)"/>
    <property type="match status" value="1"/>
</dbReference>
<sequence length="549" mass="63328">MTVKSIRRAYHVIRTALHYGLDDLLPPKLTPWYFKLLRYCFFWLRNQHKDKVGGERLKLAMQELGPVYIKFGQMLSTRRDLLSDEWAEELAMLQDRVPPFDSAIARESIEKELNAPIERYFNDFDDTPLASASISQVHTATLKSNGAAVVLKVLRPDVEKKVHADLLLMSQAADFLERLLGANNRLRPAEVVEDYRTTIEGELNLKLEALNAIKLRNNFIDSNALYIPYMYEELCFTRLIVMERIDGIPVSDKVALEAQGTNLKLLAERGVELFFTQVFRDNFFHADMHPGNVFVSREHPNDPFYIGLDCGIMGTLTDEDKRYLAENFLAFFNRDYRRIAQLYIESGWVSADTDVGAFEQAVKVVCEPMFNKPLDEISFGHVLLELFRTARRFDMVVQPQLVLLEKTLLYIEGLGRQLYPQLDLWQTAKPFLEQWMAEQVGPKAMAAKVKQQLPYWAEHLPELPELIYDNLKIGRDLSKNQNKLLDRYLKHQQKAHKSNYLLITSAILVICGTILLNQDATLWPSYGSIGIGITLWVLGWRSRPKNRKI</sequence>
<organism>
    <name type="scientific">Shewanella pealeana (strain ATCC 700345 / ANG-SQ1)</name>
    <dbReference type="NCBI Taxonomy" id="398579"/>
    <lineage>
        <taxon>Bacteria</taxon>
        <taxon>Pseudomonadati</taxon>
        <taxon>Pseudomonadota</taxon>
        <taxon>Gammaproteobacteria</taxon>
        <taxon>Alteromonadales</taxon>
        <taxon>Shewanellaceae</taxon>
        <taxon>Shewanella</taxon>
    </lineage>
</organism>
<keyword id="KW-0067">ATP-binding</keyword>
<keyword id="KW-0997">Cell inner membrane</keyword>
<keyword id="KW-1003">Cell membrane</keyword>
<keyword id="KW-0418">Kinase</keyword>
<keyword id="KW-0472">Membrane</keyword>
<keyword id="KW-0547">Nucleotide-binding</keyword>
<keyword id="KW-1185">Reference proteome</keyword>
<keyword id="KW-0808">Transferase</keyword>
<keyword id="KW-0812">Transmembrane</keyword>
<keyword id="KW-1133">Transmembrane helix</keyword>
<keyword id="KW-0831">Ubiquinone biosynthesis</keyword>